<evidence type="ECO:0000255" key="1">
    <source>
        <dbReference type="HAMAP-Rule" id="MF_01590"/>
    </source>
</evidence>
<keyword id="KW-1185">Reference proteome</keyword>
<keyword id="KW-0808">Transferase</keyword>
<keyword id="KW-0819">tRNA processing</keyword>
<feature type="chain" id="PRO_0000313939" description="tRNA U34 carboxymethyltransferase">
    <location>
        <begin position="1"/>
        <end position="324"/>
    </location>
</feature>
<feature type="binding site" evidence="1">
    <location>
        <position position="92"/>
    </location>
    <ligand>
        <name>carboxy-S-adenosyl-L-methionine</name>
        <dbReference type="ChEBI" id="CHEBI:134278"/>
    </ligand>
</feature>
<feature type="binding site" evidence="1">
    <location>
        <position position="106"/>
    </location>
    <ligand>
        <name>carboxy-S-adenosyl-L-methionine</name>
        <dbReference type="ChEBI" id="CHEBI:134278"/>
    </ligand>
</feature>
<feature type="binding site" evidence="1">
    <location>
        <position position="111"/>
    </location>
    <ligand>
        <name>carboxy-S-adenosyl-L-methionine</name>
        <dbReference type="ChEBI" id="CHEBI:134278"/>
    </ligand>
</feature>
<feature type="binding site" evidence="1">
    <location>
        <position position="131"/>
    </location>
    <ligand>
        <name>carboxy-S-adenosyl-L-methionine</name>
        <dbReference type="ChEBI" id="CHEBI:134278"/>
    </ligand>
</feature>
<feature type="binding site" evidence="1">
    <location>
        <begin position="181"/>
        <end position="182"/>
    </location>
    <ligand>
        <name>carboxy-S-adenosyl-L-methionine</name>
        <dbReference type="ChEBI" id="CHEBI:134278"/>
    </ligand>
</feature>
<feature type="binding site" evidence="1">
    <location>
        <position position="197"/>
    </location>
    <ligand>
        <name>carboxy-S-adenosyl-L-methionine</name>
        <dbReference type="ChEBI" id="CHEBI:134278"/>
    </ligand>
</feature>
<feature type="binding site" evidence="1">
    <location>
        <position position="201"/>
    </location>
    <ligand>
        <name>carboxy-S-adenosyl-L-methionine</name>
        <dbReference type="ChEBI" id="CHEBI:134278"/>
    </ligand>
</feature>
<feature type="binding site" evidence="1">
    <location>
        <position position="316"/>
    </location>
    <ligand>
        <name>carboxy-S-adenosyl-L-methionine</name>
        <dbReference type="ChEBI" id="CHEBI:134278"/>
    </ligand>
</feature>
<name>CMOB_SYNC1</name>
<gene>
    <name evidence="1" type="primary">cmoB</name>
    <name type="ordered locus">Pcar_0080</name>
</gene>
<protein>
    <recommendedName>
        <fullName evidence="1">tRNA U34 carboxymethyltransferase</fullName>
        <ecNumber evidence="1">2.5.1.-</ecNumber>
    </recommendedName>
</protein>
<comment type="function">
    <text evidence="1">Catalyzes carboxymethyl transfer from carboxy-S-adenosyl-L-methionine (Cx-SAM) to 5-hydroxyuridine (ho5U) to form 5-carboxymethoxyuridine (cmo5U) at position 34 in tRNAs.</text>
</comment>
<comment type="catalytic activity">
    <reaction evidence="1">
        <text>carboxy-S-adenosyl-L-methionine + 5-hydroxyuridine(34) in tRNA = 5-carboxymethoxyuridine(34) in tRNA + S-adenosyl-L-homocysteine + H(+)</text>
        <dbReference type="Rhea" id="RHEA:52848"/>
        <dbReference type="Rhea" id="RHEA-COMP:13381"/>
        <dbReference type="Rhea" id="RHEA-COMP:13383"/>
        <dbReference type="ChEBI" id="CHEBI:15378"/>
        <dbReference type="ChEBI" id="CHEBI:57856"/>
        <dbReference type="ChEBI" id="CHEBI:134278"/>
        <dbReference type="ChEBI" id="CHEBI:136877"/>
        <dbReference type="ChEBI" id="CHEBI:136879"/>
    </reaction>
</comment>
<comment type="subunit">
    <text evidence="1">Homotetramer.</text>
</comment>
<comment type="similarity">
    <text evidence="1">Belongs to the class I-like SAM-binding methyltransferase superfamily. CmoB family.</text>
</comment>
<reference key="1">
    <citation type="submission" date="2005-10" db="EMBL/GenBank/DDBJ databases">
        <title>Complete sequence of Pelobacter carbinolicus DSM 2380.</title>
        <authorList>
            <person name="Copeland A."/>
            <person name="Lucas S."/>
            <person name="Lapidus A."/>
            <person name="Barry K."/>
            <person name="Detter J.C."/>
            <person name="Glavina T."/>
            <person name="Hammon N."/>
            <person name="Israni S."/>
            <person name="Pitluck S."/>
            <person name="Chertkov O."/>
            <person name="Schmutz J."/>
            <person name="Larimer F."/>
            <person name="Land M."/>
            <person name="Kyrpides N."/>
            <person name="Ivanova N."/>
            <person name="Richardson P."/>
        </authorList>
    </citation>
    <scope>NUCLEOTIDE SEQUENCE [LARGE SCALE GENOMIC DNA]</scope>
    <source>
        <strain>DSM 2380 / NBRC 103641 / GraBd1</strain>
    </source>
</reference>
<accession>Q3A8E9</accession>
<dbReference type="EC" id="2.5.1.-" evidence="1"/>
<dbReference type="EMBL" id="CP000142">
    <property type="protein sequence ID" value="ABA87343.1"/>
    <property type="molecule type" value="Genomic_DNA"/>
</dbReference>
<dbReference type="RefSeq" id="WP_011339731.1">
    <property type="nucleotide sequence ID" value="NC_007498.2"/>
</dbReference>
<dbReference type="SMR" id="Q3A8E9"/>
<dbReference type="STRING" id="338963.Pcar_0080"/>
<dbReference type="KEGG" id="pca:Pcar_0080"/>
<dbReference type="eggNOG" id="COG0500">
    <property type="taxonomic scope" value="Bacteria"/>
</dbReference>
<dbReference type="HOGENOM" id="CLU_052665_0_0_7"/>
<dbReference type="OrthoDB" id="9765084at2"/>
<dbReference type="Proteomes" id="UP000002534">
    <property type="component" value="Chromosome"/>
</dbReference>
<dbReference type="GO" id="GO:0016765">
    <property type="term" value="F:transferase activity, transferring alkyl or aryl (other than methyl) groups"/>
    <property type="evidence" value="ECO:0007669"/>
    <property type="project" value="InterPro"/>
</dbReference>
<dbReference type="GO" id="GO:0002098">
    <property type="term" value="P:tRNA wobble uridine modification"/>
    <property type="evidence" value="ECO:0007669"/>
    <property type="project" value="InterPro"/>
</dbReference>
<dbReference type="CDD" id="cd02440">
    <property type="entry name" value="AdoMet_MTases"/>
    <property type="match status" value="1"/>
</dbReference>
<dbReference type="Gene3D" id="3.40.50.150">
    <property type="entry name" value="Vaccinia Virus protein VP39"/>
    <property type="match status" value="1"/>
</dbReference>
<dbReference type="HAMAP" id="MF_01590">
    <property type="entry name" value="tRNA_carboxymethyltr_CmoB"/>
    <property type="match status" value="1"/>
</dbReference>
<dbReference type="InterPro" id="IPR010017">
    <property type="entry name" value="CmoB"/>
</dbReference>
<dbReference type="InterPro" id="IPR027555">
    <property type="entry name" value="Mo5U34_MeTrfas-like"/>
</dbReference>
<dbReference type="InterPro" id="IPR029063">
    <property type="entry name" value="SAM-dependent_MTases_sf"/>
</dbReference>
<dbReference type="NCBIfam" id="NF011650">
    <property type="entry name" value="PRK15068.1"/>
    <property type="match status" value="1"/>
</dbReference>
<dbReference type="NCBIfam" id="TIGR00452">
    <property type="entry name" value="tRNA 5-methoxyuridine(34)/uridine 5-oxyacetic acid(34) synthase CmoB"/>
    <property type="match status" value="1"/>
</dbReference>
<dbReference type="PANTHER" id="PTHR43861">
    <property type="entry name" value="TRANS-ACONITATE 2-METHYLTRANSFERASE-RELATED"/>
    <property type="match status" value="1"/>
</dbReference>
<dbReference type="Pfam" id="PF08003">
    <property type="entry name" value="Methyltransf_9"/>
    <property type="match status" value="1"/>
</dbReference>
<dbReference type="SUPFAM" id="SSF53335">
    <property type="entry name" value="S-adenosyl-L-methionine-dependent methyltransferases"/>
    <property type="match status" value="1"/>
</dbReference>
<organism>
    <name type="scientific">Syntrophotalea carbinolica (strain DSM 2380 / NBRC 103641 / GraBd1)</name>
    <name type="common">Pelobacter carbinolicus</name>
    <dbReference type="NCBI Taxonomy" id="338963"/>
    <lineage>
        <taxon>Bacteria</taxon>
        <taxon>Pseudomonadati</taxon>
        <taxon>Thermodesulfobacteriota</taxon>
        <taxon>Desulfuromonadia</taxon>
        <taxon>Desulfuromonadales</taxon>
        <taxon>Syntrophotaleaceae</taxon>
        <taxon>Syntrophotalea</taxon>
    </lineage>
</organism>
<proteinExistence type="inferred from homology"/>
<sequence length="324" mass="36852">MIELLSAAGQAIGNGPWQTALNTLLNEKSRQLTDVDGNARRLTALMNQLPDLLPSHRNLASGRIEIGTPEDLTETQHQALYDTLMAFRPWRKGPFNIFGIPVDTEWRSDLKWARIAPHLAPLQGRRILDVGSSCGYYLMRMAEANPQLALGLEPYPPLFCQYVLLQRWLKLPQVHCLPLKLEELPPMDGYFDTIFHMGVLYHQRSPHEALKQLASLLRPGGELVLETLVLDGDQDLALCPRDRYAKMRNVFFLPTVPCLEAWLNKAGFEDIRCVDRSWTTIEEQHPTPWINTESLPDFLDPSDPTRTIEGYQAPLRAAVIARRR</sequence>